<accession>B1XEL0</accession>
<dbReference type="EC" id="1.2.1.72" evidence="1"/>
<dbReference type="EMBL" id="CP000948">
    <property type="protein sequence ID" value="ACB04026.1"/>
    <property type="molecule type" value="Genomic_DNA"/>
</dbReference>
<dbReference type="RefSeq" id="WP_000218480.1">
    <property type="nucleotide sequence ID" value="NC_010473.1"/>
</dbReference>
<dbReference type="SMR" id="B1XEL0"/>
<dbReference type="GeneID" id="93779071"/>
<dbReference type="KEGG" id="ecd:ECDH10B_3102"/>
<dbReference type="HOGENOM" id="CLU_030140_0_2_6"/>
<dbReference type="UniPathway" id="UPA00244">
    <property type="reaction ID" value="UER00309"/>
</dbReference>
<dbReference type="GO" id="GO:0005737">
    <property type="term" value="C:cytoplasm"/>
    <property type="evidence" value="ECO:0007669"/>
    <property type="project" value="UniProtKB-SubCell"/>
</dbReference>
<dbReference type="GO" id="GO:0048001">
    <property type="term" value="F:erythrose-4-phosphate dehydrogenase activity"/>
    <property type="evidence" value="ECO:0007669"/>
    <property type="project" value="UniProtKB-UniRule"/>
</dbReference>
<dbReference type="GO" id="GO:0051287">
    <property type="term" value="F:NAD binding"/>
    <property type="evidence" value="ECO:0007669"/>
    <property type="project" value="InterPro"/>
</dbReference>
<dbReference type="GO" id="GO:0042823">
    <property type="term" value="P:pyridoxal phosphate biosynthetic process"/>
    <property type="evidence" value="ECO:0007669"/>
    <property type="project" value="UniProtKB-UniRule"/>
</dbReference>
<dbReference type="GO" id="GO:0008615">
    <property type="term" value="P:pyridoxine biosynthetic process"/>
    <property type="evidence" value="ECO:0007669"/>
    <property type="project" value="UniProtKB-UniRule"/>
</dbReference>
<dbReference type="CDD" id="cd23937">
    <property type="entry name" value="GAPDH_C_E4PDH"/>
    <property type="match status" value="1"/>
</dbReference>
<dbReference type="CDD" id="cd17892">
    <property type="entry name" value="GAPDH_N_E4PDH"/>
    <property type="match status" value="1"/>
</dbReference>
<dbReference type="FunFam" id="3.30.360.10:FF:000007">
    <property type="entry name" value="D-erythrose-4-phosphate dehydrogenase"/>
    <property type="match status" value="1"/>
</dbReference>
<dbReference type="FunFam" id="3.40.50.720:FF:000001">
    <property type="entry name" value="Glyceraldehyde-3-phosphate dehydrogenase"/>
    <property type="match status" value="1"/>
</dbReference>
<dbReference type="Gene3D" id="3.30.360.10">
    <property type="entry name" value="Dihydrodipicolinate Reductase, domain 2"/>
    <property type="match status" value="1"/>
</dbReference>
<dbReference type="Gene3D" id="3.40.50.720">
    <property type="entry name" value="NAD(P)-binding Rossmann-like Domain"/>
    <property type="match status" value="1"/>
</dbReference>
<dbReference type="HAMAP" id="MF_01640">
    <property type="entry name" value="E4P_dehydrog"/>
    <property type="match status" value="1"/>
</dbReference>
<dbReference type="InterPro" id="IPR006422">
    <property type="entry name" value="E4P_DH_bac"/>
</dbReference>
<dbReference type="InterPro" id="IPR020831">
    <property type="entry name" value="GlycerAld/Erythrose_P_DH"/>
</dbReference>
<dbReference type="InterPro" id="IPR020830">
    <property type="entry name" value="GlycerAld_3-P_DH_AS"/>
</dbReference>
<dbReference type="InterPro" id="IPR020829">
    <property type="entry name" value="GlycerAld_3-P_DH_cat"/>
</dbReference>
<dbReference type="InterPro" id="IPR020828">
    <property type="entry name" value="GlycerAld_3-P_DH_NAD(P)-bd"/>
</dbReference>
<dbReference type="InterPro" id="IPR036291">
    <property type="entry name" value="NAD(P)-bd_dom_sf"/>
</dbReference>
<dbReference type="NCBIfam" id="TIGR01532">
    <property type="entry name" value="E4PD_g-proteo"/>
    <property type="match status" value="1"/>
</dbReference>
<dbReference type="NCBIfam" id="NF010058">
    <property type="entry name" value="PRK13535.1"/>
    <property type="match status" value="1"/>
</dbReference>
<dbReference type="PANTHER" id="PTHR43148">
    <property type="entry name" value="GLYCERALDEHYDE-3-PHOSPHATE DEHYDROGENASE 2"/>
    <property type="match status" value="1"/>
</dbReference>
<dbReference type="Pfam" id="PF02800">
    <property type="entry name" value="Gp_dh_C"/>
    <property type="match status" value="1"/>
</dbReference>
<dbReference type="Pfam" id="PF00044">
    <property type="entry name" value="Gp_dh_N"/>
    <property type="match status" value="1"/>
</dbReference>
<dbReference type="PIRSF" id="PIRSF000149">
    <property type="entry name" value="GAP_DH"/>
    <property type="match status" value="1"/>
</dbReference>
<dbReference type="PRINTS" id="PR00078">
    <property type="entry name" value="G3PDHDRGNASE"/>
</dbReference>
<dbReference type="SMART" id="SM00846">
    <property type="entry name" value="Gp_dh_N"/>
    <property type="match status" value="1"/>
</dbReference>
<dbReference type="SUPFAM" id="SSF55347">
    <property type="entry name" value="Glyceraldehyde-3-phosphate dehydrogenase-like, C-terminal domain"/>
    <property type="match status" value="1"/>
</dbReference>
<dbReference type="SUPFAM" id="SSF51735">
    <property type="entry name" value="NAD(P)-binding Rossmann-fold domains"/>
    <property type="match status" value="1"/>
</dbReference>
<dbReference type="PROSITE" id="PS00071">
    <property type="entry name" value="GAPDH"/>
    <property type="match status" value="1"/>
</dbReference>
<name>E4PD_ECODH</name>
<keyword id="KW-0963">Cytoplasm</keyword>
<keyword id="KW-0520">NAD</keyword>
<keyword id="KW-0560">Oxidoreductase</keyword>
<keyword id="KW-0664">Pyridoxine biosynthesis</keyword>
<organism>
    <name type="scientific">Escherichia coli (strain K12 / DH10B)</name>
    <dbReference type="NCBI Taxonomy" id="316385"/>
    <lineage>
        <taxon>Bacteria</taxon>
        <taxon>Pseudomonadati</taxon>
        <taxon>Pseudomonadota</taxon>
        <taxon>Gammaproteobacteria</taxon>
        <taxon>Enterobacterales</taxon>
        <taxon>Enterobacteriaceae</taxon>
        <taxon>Escherichia</taxon>
    </lineage>
</organism>
<comment type="function">
    <text evidence="1">Catalyzes the NAD-dependent conversion of D-erythrose 4-phosphate to 4-phosphoerythronate.</text>
</comment>
<comment type="catalytic activity">
    <reaction evidence="1">
        <text>D-erythrose 4-phosphate + NAD(+) + H2O = 4-phospho-D-erythronate + NADH + 2 H(+)</text>
        <dbReference type="Rhea" id="RHEA:12056"/>
        <dbReference type="ChEBI" id="CHEBI:15377"/>
        <dbReference type="ChEBI" id="CHEBI:15378"/>
        <dbReference type="ChEBI" id="CHEBI:16897"/>
        <dbReference type="ChEBI" id="CHEBI:57540"/>
        <dbReference type="ChEBI" id="CHEBI:57945"/>
        <dbReference type="ChEBI" id="CHEBI:58766"/>
        <dbReference type="EC" id="1.2.1.72"/>
    </reaction>
</comment>
<comment type="pathway">
    <text evidence="1">Cofactor biosynthesis; pyridoxine 5'-phosphate biosynthesis; pyridoxine 5'-phosphate from D-erythrose 4-phosphate: step 1/5.</text>
</comment>
<comment type="subunit">
    <text evidence="1">Homotetramer.</text>
</comment>
<comment type="subcellular location">
    <subcellularLocation>
        <location evidence="1">Cytoplasm</location>
    </subcellularLocation>
</comment>
<comment type="similarity">
    <text evidence="1">Belongs to the glyceraldehyde-3-phosphate dehydrogenase family. Epd subfamily.</text>
</comment>
<proteinExistence type="inferred from homology"/>
<gene>
    <name evidence="1" type="primary">epd</name>
    <name type="ordered locus">ECDH10B_3102</name>
</gene>
<protein>
    <recommendedName>
        <fullName evidence="1">D-erythrose-4-phosphate dehydrogenase</fullName>
        <shortName evidence="1">E4PDH</shortName>
        <ecNumber evidence="1">1.2.1.72</ecNumber>
    </recommendedName>
</protein>
<sequence>MTVRVAINGFGRIGRNVVRALYESGRRAEITVVAINELADAAGMAHLLKYDTSHGRFAWEVRQERDQLFVGDDAIRVLHERSLQSLPWRELGVDVVLDCTGVYGSREHGEAHIAAGAKKVLFSHPGSNDLDATVVYGVNQDQLRAEHRIVSNASCTTNCIIPVIKLLDDAYGIESGTVTTIHSAMHDQQVIDAYHPDLRRTRAASQSIIPVDTKLAAGITRFFPQFNDRFEAIAVRVPTINVTAIDLSVTVKKPVKANEVNLLLQKAAQGAFHGIVDYTELPLVSVDFNHDPHSAIVDGTQTRVSGAHLIKTLVWCDNEWGFANRMLDTTLAMATVAFR</sequence>
<evidence type="ECO:0000255" key="1">
    <source>
        <dbReference type="HAMAP-Rule" id="MF_01640"/>
    </source>
</evidence>
<feature type="chain" id="PRO_1000186824" description="D-erythrose-4-phosphate dehydrogenase">
    <location>
        <begin position="1"/>
        <end position="339"/>
    </location>
</feature>
<feature type="active site" description="Nucleophile" evidence="1">
    <location>
        <position position="155"/>
    </location>
</feature>
<feature type="binding site" evidence="1">
    <location>
        <begin position="12"/>
        <end position="13"/>
    </location>
    <ligand>
        <name>NAD(+)</name>
        <dbReference type="ChEBI" id="CHEBI:57540"/>
    </ligand>
</feature>
<feature type="binding site" evidence="1">
    <location>
        <position position="81"/>
    </location>
    <ligand>
        <name>NAD(+)</name>
        <dbReference type="ChEBI" id="CHEBI:57540"/>
    </ligand>
</feature>
<feature type="binding site" evidence="1">
    <location>
        <begin position="154"/>
        <end position="156"/>
    </location>
    <ligand>
        <name>substrate</name>
    </ligand>
</feature>
<feature type="binding site" evidence="1">
    <location>
        <position position="200"/>
    </location>
    <ligand>
        <name>substrate</name>
    </ligand>
</feature>
<feature type="binding site" evidence="1">
    <location>
        <begin position="213"/>
        <end position="214"/>
    </location>
    <ligand>
        <name>substrate</name>
    </ligand>
</feature>
<feature type="binding site" evidence="1">
    <location>
        <position position="236"/>
    </location>
    <ligand>
        <name>substrate</name>
    </ligand>
</feature>
<feature type="binding site" evidence="1">
    <location>
        <position position="318"/>
    </location>
    <ligand>
        <name>NAD(+)</name>
        <dbReference type="ChEBI" id="CHEBI:57540"/>
    </ligand>
</feature>
<feature type="site" description="Activates thiol group during catalysis" evidence="1">
    <location>
        <position position="182"/>
    </location>
</feature>
<reference key="1">
    <citation type="journal article" date="2008" name="J. Bacteriol.">
        <title>The complete genome sequence of Escherichia coli DH10B: insights into the biology of a laboratory workhorse.</title>
        <authorList>
            <person name="Durfee T."/>
            <person name="Nelson R."/>
            <person name="Baldwin S."/>
            <person name="Plunkett G. III"/>
            <person name="Burland V."/>
            <person name="Mau B."/>
            <person name="Petrosino J.F."/>
            <person name="Qin X."/>
            <person name="Muzny D.M."/>
            <person name="Ayele M."/>
            <person name="Gibbs R.A."/>
            <person name="Csorgo B."/>
            <person name="Posfai G."/>
            <person name="Weinstock G.M."/>
            <person name="Blattner F.R."/>
        </authorList>
    </citation>
    <scope>NUCLEOTIDE SEQUENCE [LARGE SCALE GENOMIC DNA]</scope>
    <source>
        <strain>K12 / DH10B</strain>
    </source>
</reference>